<name>CP26C_HUMAN</name>
<gene>
    <name type="primary">CYP26C1</name>
</gene>
<comment type="function">
    <text evidence="1 3 7">A cytochrome P450 monooxygenase involved in the metabolism of retinoates (RAs), the active metabolites of vitamin A, and critical signaling molecules in animals (PubMed:14532297). RAs exist as at least four different isomers: all-trans-RA (atRA), 9-cis-RA, 13-cis-RA, and 9,13-dicis-RA, where atRA is considered to be the biologically active isomer, although 9-cis-RA and 13-cis-RA also have activity (Probable). Catalyzes the oxidation of atRA primarily at C-4 (PubMed:14532297). Oxidation of atRA limits its biological activity and initiates a degradative process leading to its eventual elimination, thereby contributes to the regulation of atRA homeostasis and signaling (Probable). Able to metabolize other RAs such as 9-cis with high efficiency (PubMed:14532297). Can oxidize all-trans-13,14-dihydroretinoate (DRA) to metabolites which could include all-trans-4-oxo-DRA, all-trans-4-hydroxy-DRA, all-trans-5,8-epoxy-DRA, and all-trans-18-hydroxy-DRA (By similarity). Shares sequence similarity with other CYP26 family members, but has higher affinity to 9-cis-RA and is much less sensitive to the inhibitory effects of ketoconazole (PubMed:14532297). In cooperation with Cyp26a1, contributes to the CNS patterning and the development of regions of higher visual acuity (By similarity).</text>
</comment>
<comment type="catalytic activity">
    <reaction evidence="3">
        <text>an organic molecule + reduced [NADPH--hemoprotein reductase] + O2 = an alcohol + oxidized [NADPH--hemoprotein reductase] + H2O + H(+)</text>
        <dbReference type="Rhea" id="RHEA:17149"/>
        <dbReference type="Rhea" id="RHEA-COMP:11964"/>
        <dbReference type="Rhea" id="RHEA-COMP:11965"/>
        <dbReference type="ChEBI" id="CHEBI:15377"/>
        <dbReference type="ChEBI" id="CHEBI:15378"/>
        <dbReference type="ChEBI" id="CHEBI:15379"/>
        <dbReference type="ChEBI" id="CHEBI:30879"/>
        <dbReference type="ChEBI" id="CHEBI:57618"/>
        <dbReference type="ChEBI" id="CHEBI:58210"/>
        <dbReference type="ChEBI" id="CHEBI:142491"/>
        <dbReference type="EC" id="1.14.14.1"/>
    </reaction>
    <physiologicalReaction direction="left-to-right" evidence="7">
        <dbReference type="Rhea" id="RHEA:17150"/>
    </physiologicalReaction>
</comment>
<comment type="catalytic activity">
    <reaction evidence="3">
        <text>all-trans-retinoate + reduced [NADPH--hemoprotein reductase] + O2 = all-trans-4-hydroxyretinoate + oxidized [NADPH--hemoprotein reductase] + H2O + H(+)</text>
        <dbReference type="Rhea" id="RHEA:51984"/>
        <dbReference type="Rhea" id="RHEA-COMP:11964"/>
        <dbReference type="Rhea" id="RHEA-COMP:11965"/>
        <dbReference type="ChEBI" id="CHEBI:15377"/>
        <dbReference type="ChEBI" id="CHEBI:15378"/>
        <dbReference type="ChEBI" id="CHEBI:15379"/>
        <dbReference type="ChEBI" id="CHEBI:35291"/>
        <dbReference type="ChEBI" id="CHEBI:57618"/>
        <dbReference type="ChEBI" id="CHEBI:58210"/>
        <dbReference type="ChEBI" id="CHEBI:134178"/>
    </reaction>
    <physiologicalReaction direction="left-to-right" evidence="7">
        <dbReference type="Rhea" id="RHEA:51985"/>
    </physiologicalReaction>
</comment>
<comment type="catalytic activity">
    <reaction evidence="7">
        <text>all-trans-4-hydroxyretinoate + reduced [NADPH--hemoprotein reductase] + O2 = all-trans-4-oxoretinoate + oxidized [NADPH--hemoprotein reductase] + 2 H2O + H(+)</text>
        <dbReference type="Rhea" id="RHEA:75851"/>
        <dbReference type="Rhea" id="RHEA-COMP:11964"/>
        <dbReference type="Rhea" id="RHEA-COMP:11965"/>
        <dbReference type="ChEBI" id="CHEBI:15377"/>
        <dbReference type="ChEBI" id="CHEBI:15378"/>
        <dbReference type="ChEBI" id="CHEBI:15379"/>
        <dbReference type="ChEBI" id="CHEBI:57618"/>
        <dbReference type="ChEBI" id="CHEBI:58210"/>
        <dbReference type="ChEBI" id="CHEBI:134178"/>
        <dbReference type="ChEBI" id="CHEBI:134186"/>
    </reaction>
    <physiologicalReaction direction="left-to-right" evidence="7">
        <dbReference type="Rhea" id="RHEA:75852"/>
    </physiologicalReaction>
</comment>
<comment type="catalytic activity">
    <reaction evidence="3">
        <text>9-cis-retinoate + reduced [NADPH--hemoprotein reductase] + O2 = 9-cis-4-hydroxyretinoate + oxidized [NADPH--hemoprotein reductase] + H2O + H(+)</text>
        <dbReference type="Rhea" id="RHEA:75847"/>
        <dbReference type="Rhea" id="RHEA-COMP:11964"/>
        <dbReference type="Rhea" id="RHEA-COMP:11965"/>
        <dbReference type="ChEBI" id="CHEBI:15377"/>
        <dbReference type="ChEBI" id="CHEBI:15378"/>
        <dbReference type="ChEBI" id="CHEBI:15379"/>
        <dbReference type="ChEBI" id="CHEBI:57618"/>
        <dbReference type="ChEBI" id="CHEBI:58210"/>
        <dbReference type="ChEBI" id="CHEBI:78630"/>
        <dbReference type="ChEBI" id="CHEBI:139253"/>
    </reaction>
    <physiologicalReaction direction="left-to-right" evidence="7">
        <dbReference type="Rhea" id="RHEA:75848"/>
    </physiologicalReaction>
</comment>
<comment type="catalytic activity">
    <reaction evidence="7">
        <text>9-cis-4-hydroxyretinoate + reduced [NADPH--hemoprotein reductase] + O2 = 9-cis-4-oxoretinoate + oxidized [NADPH--hemoprotein reductase] + 2 H2O + H(+)</text>
        <dbReference type="Rhea" id="RHEA:75855"/>
        <dbReference type="Rhea" id="RHEA-COMP:11964"/>
        <dbReference type="Rhea" id="RHEA-COMP:11965"/>
        <dbReference type="ChEBI" id="CHEBI:15377"/>
        <dbReference type="ChEBI" id="CHEBI:15378"/>
        <dbReference type="ChEBI" id="CHEBI:15379"/>
        <dbReference type="ChEBI" id="CHEBI:57618"/>
        <dbReference type="ChEBI" id="CHEBI:58210"/>
        <dbReference type="ChEBI" id="CHEBI:139253"/>
        <dbReference type="ChEBI" id="CHEBI:139254"/>
    </reaction>
    <physiologicalReaction direction="left-to-right" evidence="7">
        <dbReference type="Rhea" id="RHEA:75856"/>
    </physiologicalReaction>
</comment>
<comment type="catalytic activity">
    <reaction evidence="1">
        <text>all-trans-4-hydroxy-13,14-dihydroretinoate + reduced [NADPH--hemoprotein reductase] + O2 = all-trans-4-oxo-13,14-dihydroretinoate + oxidized [NADPH--hemoprotein reductase] + 2 H2O + H(+)</text>
        <dbReference type="Rhea" id="RHEA:75859"/>
        <dbReference type="Rhea" id="RHEA-COMP:11964"/>
        <dbReference type="Rhea" id="RHEA-COMP:11965"/>
        <dbReference type="ChEBI" id="CHEBI:15377"/>
        <dbReference type="ChEBI" id="CHEBI:15378"/>
        <dbReference type="ChEBI" id="CHEBI:15379"/>
        <dbReference type="ChEBI" id="CHEBI:57618"/>
        <dbReference type="ChEBI" id="CHEBI:58210"/>
        <dbReference type="ChEBI" id="CHEBI:194184"/>
        <dbReference type="ChEBI" id="CHEBI:194478"/>
    </reaction>
    <physiologicalReaction direction="left-to-right" evidence="1">
        <dbReference type="Rhea" id="RHEA:75860"/>
    </physiologicalReaction>
</comment>
<comment type="catalytic activity">
    <reaction evidence="1">
        <text>all-trans-13,14-dihydroretinoate + reduced [NADPH--hemoprotein reductase] + O2 = all-trans-4-hydroxy-13,14-dihydroretinoate + oxidized [NADPH--hemoprotein reductase] + H2O + H(+)</text>
        <dbReference type="Rhea" id="RHEA:75863"/>
        <dbReference type="Rhea" id="RHEA-COMP:11964"/>
        <dbReference type="Rhea" id="RHEA-COMP:11965"/>
        <dbReference type="ChEBI" id="CHEBI:15377"/>
        <dbReference type="ChEBI" id="CHEBI:15378"/>
        <dbReference type="ChEBI" id="CHEBI:15379"/>
        <dbReference type="ChEBI" id="CHEBI:57618"/>
        <dbReference type="ChEBI" id="CHEBI:58210"/>
        <dbReference type="ChEBI" id="CHEBI:194183"/>
        <dbReference type="ChEBI" id="CHEBI:194478"/>
    </reaction>
    <physiologicalReaction direction="left-to-right" evidence="1">
        <dbReference type="Rhea" id="RHEA:75864"/>
    </physiologicalReaction>
</comment>
<comment type="cofactor">
    <cofactor evidence="1">
        <name>heme</name>
        <dbReference type="ChEBI" id="CHEBI:30413"/>
    </cofactor>
</comment>
<comment type="subcellular location">
    <subcellularLocation>
        <location evidence="6">Membrane</location>
        <topology evidence="6">Single-pass membrane protein</topology>
    </subcellularLocation>
</comment>
<comment type="tissue specificity">
    <text evidence="3">Detected in most tissues at very low level.</text>
</comment>
<comment type="induction">
    <text evidence="3">By retinoic acid.</text>
</comment>
<comment type="disease" evidence="4">
    <disease id="DI-03636">
        <name>Focal facial dermal dysplasia 4</name>
        <acronym>FFDD4</acronym>
        <description>A form of focal facial dermal dysplasia, a group of developmental defects characterized by bitemporal or preauricular skin lesions resembling aplasia cutis congenita. Skin defects occur at the sites of facial fusion during embryogenesis, with temporal lesions situated at the junction between the frontonasal and maxillary facial prominences, and preauricular lesions at the meeting point of the maxillary and mandibular prominences. The ectodermal lesions show consistent histologic abnormalities: atrophy and flattening of the epidermis, replacement of the dermis by loose connective tissue, reduced levels of fragmented elastic tissue and absence of the subcutaneous tissues and adnexal structures. FFDD4 is characterized by isolated, preauricular skin lesions.</description>
        <dbReference type="MIM" id="614974"/>
    </disease>
    <text>The disease is caused by variants affecting the gene represented in this entry.</text>
</comment>
<comment type="similarity">
    <text evidence="6">Belongs to the cytochrome P450 family.</text>
</comment>
<accession>Q6V0L0</accession>
<accession>Q5VXH6</accession>
<feature type="chain" id="PRO_0000051987" description="Cytochrome P450 26C1">
    <location>
        <begin position="1"/>
        <end position="522"/>
    </location>
</feature>
<feature type="transmembrane region" description="Helical" evidence="2">
    <location>
        <begin position="9"/>
        <end position="29"/>
    </location>
</feature>
<feature type="binding site" description="axial binding residue" evidence="2">
    <location>
        <position position="459"/>
    </location>
    <ligand>
        <name>heme</name>
        <dbReference type="ChEBI" id="CHEBI:30413"/>
    </ligand>
    <ligandPart>
        <name>Fe</name>
        <dbReference type="ChEBI" id="CHEBI:18248"/>
    </ligandPart>
</feature>
<feature type="sequence variant" id="VAR_022886" description="In dbSNP:rs11187265.">
    <original>R</original>
    <variation>Q</variation>
    <location>
        <position position="245"/>
    </location>
</feature>
<feature type="sequence conflict" description="In Ref. 1; AAQ55485." evidence="6" ref="1">
    <original>F</original>
    <variation>L</variation>
    <location>
        <position position="447"/>
    </location>
</feature>
<protein>
    <recommendedName>
        <fullName>Cytochrome P450 26C1</fullName>
        <shortName evidence="5">CYP26C1</shortName>
        <ecNumber evidence="3">1.14.14.1</ecNumber>
    </recommendedName>
</protein>
<reference key="1">
    <citation type="journal article" date="2004" name="J. Biol. Chem.">
        <title>A novel human cytochrome P450, CYP26C1, involved in metabolism of 9-cis and all-trans isomers of retinoic acid.</title>
        <authorList>
            <person name="Taimi M."/>
            <person name="Helvig C."/>
            <person name="Wisniewski J."/>
            <person name="Ramshaw H."/>
            <person name="White J."/>
            <person name="Amad M."/>
            <person name="Korczak B."/>
            <person name="Petkovich M."/>
        </authorList>
    </citation>
    <scope>NUCLEOTIDE SEQUENCE [MRNA]</scope>
    <scope>TISSUE SPECIFICITY</scope>
    <scope>INDUCTION</scope>
    <scope>FUNCTION</scope>
    <scope>CATALYTIC ACTIVITY</scope>
</reference>
<reference key="2">
    <citation type="journal article" date="2004" name="Nature">
        <title>The DNA sequence and comparative analysis of human chromosome 10.</title>
        <authorList>
            <person name="Deloukas P."/>
            <person name="Earthrowl M.E."/>
            <person name="Grafham D.V."/>
            <person name="Rubenfield M."/>
            <person name="French L."/>
            <person name="Steward C.A."/>
            <person name="Sims S.K."/>
            <person name="Jones M.C."/>
            <person name="Searle S."/>
            <person name="Scott C."/>
            <person name="Howe K."/>
            <person name="Hunt S.E."/>
            <person name="Andrews T.D."/>
            <person name="Gilbert J.G.R."/>
            <person name="Swarbreck D."/>
            <person name="Ashurst J.L."/>
            <person name="Taylor A."/>
            <person name="Battles J."/>
            <person name="Bird C.P."/>
            <person name="Ainscough R."/>
            <person name="Almeida J.P."/>
            <person name="Ashwell R.I.S."/>
            <person name="Ambrose K.D."/>
            <person name="Babbage A.K."/>
            <person name="Bagguley C.L."/>
            <person name="Bailey J."/>
            <person name="Banerjee R."/>
            <person name="Bates K."/>
            <person name="Beasley H."/>
            <person name="Bray-Allen S."/>
            <person name="Brown A.J."/>
            <person name="Brown J.Y."/>
            <person name="Burford D.C."/>
            <person name="Burrill W."/>
            <person name="Burton J."/>
            <person name="Cahill P."/>
            <person name="Camire D."/>
            <person name="Carter N.P."/>
            <person name="Chapman J.C."/>
            <person name="Clark S.Y."/>
            <person name="Clarke G."/>
            <person name="Clee C.M."/>
            <person name="Clegg S."/>
            <person name="Corby N."/>
            <person name="Coulson A."/>
            <person name="Dhami P."/>
            <person name="Dutta I."/>
            <person name="Dunn M."/>
            <person name="Faulkner L."/>
            <person name="Frankish A."/>
            <person name="Frankland J.A."/>
            <person name="Garner P."/>
            <person name="Garnett J."/>
            <person name="Gribble S."/>
            <person name="Griffiths C."/>
            <person name="Grocock R."/>
            <person name="Gustafson E."/>
            <person name="Hammond S."/>
            <person name="Harley J.L."/>
            <person name="Hart E."/>
            <person name="Heath P.D."/>
            <person name="Ho T.P."/>
            <person name="Hopkins B."/>
            <person name="Horne J."/>
            <person name="Howden P.J."/>
            <person name="Huckle E."/>
            <person name="Hynds C."/>
            <person name="Johnson C."/>
            <person name="Johnson D."/>
            <person name="Kana A."/>
            <person name="Kay M."/>
            <person name="Kimberley A.M."/>
            <person name="Kershaw J.K."/>
            <person name="Kokkinaki M."/>
            <person name="Laird G.K."/>
            <person name="Lawlor S."/>
            <person name="Lee H.M."/>
            <person name="Leongamornlert D.A."/>
            <person name="Laird G."/>
            <person name="Lloyd C."/>
            <person name="Lloyd D.M."/>
            <person name="Loveland J."/>
            <person name="Lovell J."/>
            <person name="McLaren S."/>
            <person name="McLay K.E."/>
            <person name="McMurray A."/>
            <person name="Mashreghi-Mohammadi M."/>
            <person name="Matthews L."/>
            <person name="Milne S."/>
            <person name="Nickerson T."/>
            <person name="Nguyen M."/>
            <person name="Overton-Larty E."/>
            <person name="Palmer S.A."/>
            <person name="Pearce A.V."/>
            <person name="Peck A.I."/>
            <person name="Pelan S."/>
            <person name="Phillimore B."/>
            <person name="Porter K."/>
            <person name="Rice C.M."/>
            <person name="Rogosin A."/>
            <person name="Ross M.T."/>
            <person name="Sarafidou T."/>
            <person name="Sehra H.K."/>
            <person name="Shownkeen R."/>
            <person name="Skuce C.D."/>
            <person name="Smith M."/>
            <person name="Standring L."/>
            <person name="Sycamore N."/>
            <person name="Tester J."/>
            <person name="Thorpe A."/>
            <person name="Torcasso W."/>
            <person name="Tracey A."/>
            <person name="Tromans A."/>
            <person name="Tsolas J."/>
            <person name="Wall M."/>
            <person name="Walsh J."/>
            <person name="Wang H."/>
            <person name="Weinstock K."/>
            <person name="West A.P."/>
            <person name="Willey D.L."/>
            <person name="Whitehead S.L."/>
            <person name="Wilming L."/>
            <person name="Wray P.W."/>
            <person name="Young L."/>
            <person name="Chen Y."/>
            <person name="Lovering R.C."/>
            <person name="Moschonas N.K."/>
            <person name="Siebert R."/>
            <person name="Fechtel K."/>
            <person name="Bentley D."/>
            <person name="Durbin R.M."/>
            <person name="Hubbard T."/>
            <person name="Doucette-Stamm L."/>
            <person name="Beck S."/>
            <person name="Smith D.R."/>
            <person name="Rogers J."/>
        </authorList>
    </citation>
    <scope>NUCLEOTIDE SEQUENCE [LARGE SCALE GENOMIC DNA]</scope>
</reference>
<reference key="3">
    <citation type="journal article" date="2013" name="Hum. Mol. Genet.">
        <title>Focal facial dermal dysplasia, type IV, is caused by mutations in CYP26C1.</title>
        <authorList>
            <person name="Slavotinek A.M."/>
            <person name="Mehrotra P."/>
            <person name="Nazarenko I."/>
            <person name="Tang P.L."/>
            <person name="Lao R."/>
            <person name="Cameron D."/>
            <person name="Li B."/>
            <person name="Chu C."/>
            <person name="Chou C."/>
            <person name="Marqueling A.L."/>
            <person name="Yahyavi M."/>
            <person name="Cordoro K."/>
            <person name="Frieden I."/>
            <person name="Glaser T."/>
            <person name="Prescott T."/>
            <person name="Morren M.A."/>
            <person name="Devriendt K."/>
            <person name="Kwok P.Y."/>
            <person name="Petkovich M."/>
            <person name="Desnick R.J."/>
        </authorList>
    </citation>
    <scope>INVOLVEMENT IN FFDD4</scope>
</reference>
<proteinExistence type="evidence at protein level"/>
<keyword id="KW-0225">Disease variant</keyword>
<keyword id="KW-0038">Ectodermal dysplasia</keyword>
<keyword id="KW-0349">Heme</keyword>
<keyword id="KW-0408">Iron</keyword>
<keyword id="KW-0443">Lipid metabolism</keyword>
<keyword id="KW-0472">Membrane</keyword>
<keyword id="KW-0479">Metal-binding</keyword>
<keyword id="KW-0503">Monooxygenase</keyword>
<keyword id="KW-0560">Oxidoreductase</keyword>
<keyword id="KW-1185">Reference proteome</keyword>
<keyword id="KW-0812">Transmembrane</keyword>
<keyword id="KW-1133">Transmembrane helix</keyword>
<evidence type="ECO:0000250" key="1">
    <source>
        <dbReference type="UniProtKB" id="B2RXA7"/>
    </source>
</evidence>
<evidence type="ECO:0000255" key="2"/>
<evidence type="ECO:0000269" key="3">
    <source>
    </source>
</evidence>
<evidence type="ECO:0000269" key="4">
    <source>
    </source>
</evidence>
<evidence type="ECO:0000303" key="5">
    <source>
    </source>
</evidence>
<evidence type="ECO:0000305" key="6"/>
<evidence type="ECO:0000305" key="7">
    <source>
    </source>
</evidence>
<dbReference type="EC" id="1.14.14.1" evidence="3"/>
<dbReference type="EMBL" id="AY356349">
    <property type="protein sequence ID" value="AAQ55485.1"/>
    <property type="molecule type" value="mRNA"/>
</dbReference>
<dbReference type="EMBL" id="AL358613">
    <property type="status" value="NOT_ANNOTATED_CDS"/>
    <property type="molecule type" value="Genomic_DNA"/>
</dbReference>
<dbReference type="CCDS" id="CCDS7425.1"/>
<dbReference type="RefSeq" id="NP_899230.2">
    <property type="nucleotide sequence ID" value="NM_183374.3"/>
</dbReference>
<dbReference type="SMR" id="Q6V0L0"/>
<dbReference type="FunCoup" id="Q6V0L0">
    <property type="interactions" value="146"/>
</dbReference>
<dbReference type="IntAct" id="Q6V0L0">
    <property type="interactions" value="1"/>
</dbReference>
<dbReference type="STRING" id="9606.ENSP00000498424"/>
<dbReference type="DrugBank" id="DB00523">
    <property type="generic name" value="Alitretinoin"/>
</dbReference>
<dbReference type="iPTMnet" id="Q6V0L0"/>
<dbReference type="PhosphoSitePlus" id="Q6V0L0"/>
<dbReference type="BioMuta" id="CYP26C1"/>
<dbReference type="DMDM" id="71153209"/>
<dbReference type="PaxDb" id="9606-ENSP00000285949"/>
<dbReference type="PeptideAtlas" id="Q6V0L0"/>
<dbReference type="ProteomicsDB" id="67704"/>
<dbReference type="Antibodypedia" id="45703">
    <property type="antibodies" value="145 antibodies from 25 providers"/>
</dbReference>
<dbReference type="DNASU" id="340665"/>
<dbReference type="Ensembl" id="ENST00000651965.1">
    <property type="protein sequence ID" value="ENSP00000498424.1"/>
    <property type="gene ID" value="ENSG00000187553.10"/>
</dbReference>
<dbReference type="GeneID" id="340665"/>
<dbReference type="KEGG" id="hsa:340665"/>
<dbReference type="MANE-Select" id="ENST00000651965.1">
    <property type="protein sequence ID" value="ENSP00000498424.1"/>
    <property type="RefSeq nucleotide sequence ID" value="NM_183374.3"/>
    <property type="RefSeq protein sequence ID" value="NP_899230.2"/>
</dbReference>
<dbReference type="UCSC" id="uc010qns.2">
    <property type="organism name" value="human"/>
</dbReference>
<dbReference type="AGR" id="HGNC:20577"/>
<dbReference type="CTD" id="340665"/>
<dbReference type="DisGeNET" id="340665"/>
<dbReference type="GeneCards" id="CYP26C1"/>
<dbReference type="HGNC" id="HGNC:20577">
    <property type="gene designation" value="CYP26C1"/>
</dbReference>
<dbReference type="HPA" id="ENSG00000187553">
    <property type="expression patterns" value="Not detected"/>
</dbReference>
<dbReference type="MalaCards" id="CYP26C1"/>
<dbReference type="MIM" id="608428">
    <property type="type" value="gene"/>
</dbReference>
<dbReference type="MIM" id="614974">
    <property type="type" value="phenotype"/>
</dbReference>
<dbReference type="neXtProt" id="NX_Q6V0L0"/>
<dbReference type="OpenTargets" id="ENSG00000187553"/>
<dbReference type="Orphanet" id="398189">
    <property type="disease" value="Focal facial dermal dysplasia type IV"/>
</dbReference>
<dbReference type="PharmGKB" id="PA134913464"/>
<dbReference type="VEuPathDB" id="HostDB:ENSG00000187553"/>
<dbReference type="eggNOG" id="KOG0157">
    <property type="taxonomic scope" value="Eukaryota"/>
</dbReference>
<dbReference type="GeneTree" id="ENSGT00800000124060"/>
<dbReference type="HOGENOM" id="CLU_001570_15_6_1"/>
<dbReference type="InParanoid" id="Q6V0L0"/>
<dbReference type="OMA" id="MIIHSTR"/>
<dbReference type="OrthoDB" id="1372046at2759"/>
<dbReference type="PAN-GO" id="Q6V0L0">
    <property type="GO annotations" value="2 GO annotations based on evolutionary models"/>
</dbReference>
<dbReference type="PhylomeDB" id="Q6V0L0"/>
<dbReference type="TreeFam" id="TF105093"/>
<dbReference type="PathwayCommons" id="Q6V0L0"/>
<dbReference type="Reactome" id="R-HSA-211916">
    <property type="pathway name" value="Vitamins"/>
</dbReference>
<dbReference type="Reactome" id="R-HSA-5365859">
    <property type="pathway name" value="RA biosynthesis pathway"/>
</dbReference>
<dbReference type="Reactome" id="R-HSA-5579004">
    <property type="pathway name" value="Defective CYP26C1 causes FFDD4"/>
</dbReference>
<dbReference type="SignaLink" id="Q6V0L0"/>
<dbReference type="BioGRID-ORCS" id="340665">
    <property type="hits" value="11 hits in 1143 CRISPR screens"/>
</dbReference>
<dbReference type="GeneWiki" id="CYP26C1"/>
<dbReference type="GenomeRNAi" id="340665"/>
<dbReference type="Pharos" id="Q6V0L0">
    <property type="development level" value="Tbio"/>
</dbReference>
<dbReference type="PRO" id="PR:Q6V0L0"/>
<dbReference type="Proteomes" id="UP000005640">
    <property type="component" value="Chromosome 10"/>
</dbReference>
<dbReference type="RNAct" id="Q6V0L0">
    <property type="molecule type" value="protein"/>
</dbReference>
<dbReference type="Bgee" id="ENSG00000187553">
    <property type="expression patterns" value="Expressed in primordial germ cell in gonad and 11 other cell types or tissues"/>
</dbReference>
<dbReference type="ExpressionAtlas" id="Q6V0L0">
    <property type="expression patterns" value="baseline and differential"/>
</dbReference>
<dbReference type="GO" id="GO:0005789">
    <property type="term" value="C:endoplasmic reticulum membrane"/>
    <property type="evidence" value="ECO:0000304"/>
    <property type="project" value="Reactome"/>
</dbReference>
<dbReference type="GO" id="GO:0020037">
    <property type="term" value="F:heme binding"/>
    <property type="evidence" value="ECO:0007669"/>
    <property type="project" value="InterPro"/>
</dbReference>
<dbReference type="GO" id="GO:0005506">
    <property type="term" value="F:iron ion binding"/>
    <property type="evidence" value="ECO:0007669"/>
    <property type="project" value="InterPro"/>
</dbReference>
<dbReference type="GO" id="GO:0004497">
    <property type="term" value="F:monooxygenase activity"/>
    <property type="evidence" value="ECO:0000318"/>
    <property type="project" value="GO_Central"/>
</dbReference>
<dbReference type="GO" id="GO:0016712">
    <property type="term" value="F:oxidoreductase activity, acting on paired donors, with incorporation or reduction of molecular oxygen, reduced flavin or flavoprotein as one donor, and incorporation of one atom of oxygen"/>
    <property type="evidence" value="ECO:0007669"/>
    <property type="project" value="RHEA"/>
</dbReference>
<dbReference type="GO" id="GO:0008401">
    <property type="term" value="F:retinoic acid 4-hydroxylase activity"/>
    <property type="evidence" value="ECO:0000314"/>
    <property type="project" value="BHF-UCL"/>
</dbReference>
<dbReference type="GO" id="GO:0001972">
    <property type="term" value="F:retinoic acid binding"/>
    <property type="evidence" value="ECO:0000314"/>
    <property type="project" value="BHF-UCL"/>
</dbReference>
<dbReference type="GO" id="GO:0009952">
    <property type="term" value="P:anterior/posterior pattern specification"/>
    <property type="evidence" value="ECO:0000250"/>
    <property type="project" value="BHF-UCL"/>
</dbReference>
<dbReference type="GO" id="GO:0007417">
    <property type="term" value="P:central nervous system development"/>
    <property type="evidence" value="ECO:0000250"/>
    <property type="project" value="BHF-UCL"/>
</dbReference>
<dbReference type="GO" id="GO:0048387">
    <property type="term" value="P:negative regulation of retinoic acid receptor signaling pathway"/>
    <property type="evidence" value="ECO:0000303"/>
    <property type="project" value="BHF-UCL"/>
</dbReference>
<dbReference type="GO" id="GO:0014032">
    <property type="term" value="P:neural crest cell development"/>
    <property type="evidence" value="ECO:0000250"/>
    <property type="project" value="BHF-UCL"/>
</dbReference>
<dbReference type="GO" id="GO:0048284">
    <property type="term" value="P:organelle fusion"/>
    <property type="evidence" value="ECO:0000250"/>
    <property type="project" value="BHF-UCL"/>
</dbReference>
<dbReference type="GO" id="GO:0034653">
    <property type="term" value="P:retinoic acid catabolic process"/>
    <property type="evidence" value="ECO:0000314"/>
    <property type="project" value="BHF-UCL"/>
</dbReference>
<dbReference type="GO" id="GO:0006766">
    <property type="term" value="P:vitamin metabolic process"/>
    <property type="evidence" value="ECO:0000304"/>
    <property type="project" value="Reactome"/>
</dbReference>
<dbReference type="CDD" id="cd20636">
    <property type="entry name" value="CYP26C1"/>
    <property type="match status" value="1"/>
</dbReference>
<dbReference type="FunFam" id="1.10.630.10:FF:000009">
    <property type="entry name" value="Cytochrome P450 26B1 isoform 1"/>
    <property type="match status" value="1"/>
</dbReference>
<dbReference type="Gene3D" id="1.10.630.10">
    <property type="entry name" value="Cytochrome P450"/>
    <property type="match status" value="1"/>
</dbReference>
<dbReference type="InterPro" id="IPR001128">
    <property type="entry name" value="Cyt_P450"/>
</dbReference>
<dbReference type="InterPro" id="IPR017972">
    <property type="entry name" value="Cyt_P450_CS"/>
</dbReference>
<dbReference type="InterPro" id="IPR002403">
    <property type="entry name" value="Cyt_P450_E_grp-IV"/>
</dbReference>
<dbReference type="InterPro" id="IPR036396">
    <property type="entry name" value="Cyt_P450_sf"/>
</dbReference>
<dbReference type="PANTHER" id="PTHR24286">
    <property type="entry name" value="CYTOCHROME P450 26"/>
    <property type="match status" value="1"/>
</dbReference>
<dbReference type="PANTHER" id="PTHR24286:SF100">
    <property type="entry name" value="CYTOCHROME P450 26C1"/>
    <property type="match status" value="1"/>
</dbReference>
<dbReference type="Pfam" id="PF00067">
    <property type="entry name" value="p450"/>
    <property type="match status" value="1"/>
</dbReference>
<dbReference type="PRINTS" id="PR00465">
    <property type="entry name" value="EP450IV"/>
</dbReference>
<dbReference type="PRINTS" id="PR00385">
    <property type="entry name" value="P450"/>
</dbReference>
<dbReference type="SUPFAM" id="SSF48264">
    <property type="entry name" value="Cytochrome P450"/>
    <property type="match status" value="1"/>
</dbReference>
<dbReference type="PROSITE" id="PS00086">
    <property type="entry name" value="CYTOCHROME_P450"/>
    <property type="match status" value="1"/>
</dbReference>
<organism>
    <name type="scientific">Homo sapiens</name>
    <name type="common">Human</name>
    <dbReference type="NCBI Taxonomy" id="9606"/>
    <lineage>
        <taxon>Eukaryota</taxon>
        <taxon>Metazoa</taxon>
        <taxon>Chordata</taxon>
        <taxon>Craniata</taxon>
        <taxon>Vertebrata</taxon>
        <taxon>Euteleostomi</taxon>
        <taxon>Mammalia</taxon>
        <taxon>Eutheria</taxon>
        <taxon>Euarchontoglires</taxon>
        <taxon>Primates</taxon>
        <taxon>Haplorrhini</taxon>
        <taxon>Catarrhini</taxon>
        <taxon>Hominidae</taxon>
        <taxon>Homo</taxon>
    </lineage>
</organism>
<sequence length="522" mass="57111">MFPWGLSCLSVLGAAGTALLCAGLLLSLAQHLWTLRWMLSRDRASTLPLPKGSMGWPFFGETLHWLVQGSRFHSSRRERYGTVFKTHLLGRPVIRVSGAENVRTILLGEHRLVRSQWPQSAHILLGSHTLLGAVGEPHRRRRKVLARVFSRAALERYVPRLQGALRHEVRSWCAAGGPVSVYDASKALTFRMAARILLGLRLDEAQCATLARTFEQLVENLFSLPLDVPFSGLRKGIRARDQLHRHLEGAISEKLHEDKAAEPGDALDLIIHSARELGHEPSMQELKESAVELLFAAFFTTASASTSLVLLLLQHPAAIAKIREELVAQGLGRACGCAPGAAGGSEGPPPDCGCEPDLSLAALGRLRYVDCVVKEVLRLLPPVSGGYRTALRTFELDGYQIPKGWSVMYSIRDTHETAAVYRSPPEGFDPERFGAAREDSRGASSRFHYIPFGGGARSCLGQELAQAVLQLLAVELVRTARWELATPAFPAMQTVPIVHPVDGLRLFFHPLTPSVAGNGLCL</sequence>